<organism>
    <name type="scientific">Klebsiella phage KP34</name>
    <name type="common">Bacteriophage KP34</name>
    <dbReference type="NCBI Taxonomy" id="674081"/>
    <lineage>
        <taxon>Viruses</taxon>
        <taxon>Duplodnaviria</taxon>
        <taxon>Heunggongvirae</taxon>
        <taxon>Uroviricota</taxon>
        <taxon>Caudoviricetes</taxon>
        <taxon>Autographiviridae</taxon>
        <taxon>Slopekvirinae</taxon>
        <taxon>Drulisvirus</taxon>
        <taxon>Drulisvirus KP34</taxon>
    </lineage>
</organism>
<reference key="1">
    <citation type="journal article" date="2011" name="Appl. Microbiol. Biotechnol.">
        <title>Isolation and characterisation of KP34-a novel phiKMV-like bacteriophage for Klebsiella pneumoniae.</title>
        <authorList>
            <person name="Drulis-Kawa Z."/>
            <person name="Mackiewicz P."/>
            <person name="Kesik-Szeloch A."/>
            <person name="Maciaszczyk-Dziubinska E."/>
            <person name="Weber-Dabrowska B."/>
            <person name="Dorotkiewicz-Jach A."/>
            <person name="Augustyniak D."/>
            <person name="Majkowska-Skrobek G."/>
            <person name="Bocer T."/>
            <person name="Empel J."/>
            <person name="Kropinski A.M."/>
        </authorList>
    </citation>
    <scope>NUCLEOTIDE SEQUENCE [LARGE SCALE GENOMIC DNA]</scope>
</reference>
<reference key="2">
    <citation type="journal article" date="2017" name="Sci. Rep.">
        <title>Hydrolytic activity determination of Tail Tubular Protein A of Klebsiella pneumoniae bacteriophages towards saccharide substrates.</title>
        <authorList>
            <person name="Brzozowska E."/>
            <person name="Pyra A."/>
            <person name="Pawlik K."/>
            <person name="Janik M."/>
            <person name="Gorska S."/>
            <person name="Urbanska N."/>
            <person name="Drulis-Kawa Z."/>
            <person name="Gamian A."/>
        </authorList>
    </citation>
    <scope>FUNCTION</scope>
    <scope>CATALYTIC ACTIVITY</scope>
</reference>
<feature type="chain" id="PRO_0000458731" description="Tail tubular protein A">
    <location>
        <begin position="1"/>
        <end position="186"/>
    </location>
</feature>
<sequence>MRELDAINLTLEALGESRVMDINTSNPSAGLARSALARNRRGLLSTGFWFNVVEREVTPTADGFIKVPWNQLAVYDAGSDSKYGVRDGNLYDLMEQNQYFDSPVKLKIVLDLDFEDLPEHAAMWVANYTTAQVYLNDLGGDSNYANYAQEAERYKSMVLREHLRNQRFSTSKTRFARRIRRARFMV</sequence>
<evidence type="ECO:0000269" key="1">
    <source>
    </source>
</evidence>
<evidence type="ECO:0000303" key="2">
    <source>
    </source>
</evidence>
<evidence type="ECO:0000305" key="3"/>
<evidence type="ECO:0000305" key="4">
    <source>
    </source>
</evidence>
<evidence type="ECO:0000312" key="5">
    <source>
        <dbReference type="EMBL" id="ACY66718.1"/>
    </source>
</evidence>
<protein>
    <recommendedName>
        <fullName evidence="2">Tail tubular protein A</fullName>
        <shortName evidence="2">TTPA</shortName>
    </recommendedName>
    <alternativeName>
        <fullName evidence="2">Depolymerase</fullName>
        <ecNumber evidence="1">3.2.1.28</ecNumber>
    </alternativeName>
    <alternativeName>
        <fullName evidence="2">Gene product 44</fullName>
        <shortName evidence="2">gp44</shortName>
    </alternativeName>
</protein>
<keyword id="KW-1238">Degradation of host capsule during virus entry</keyword>
<keyword id="KW-1235">Degradation of host cell envelope components during virus entry</keyword>
<keyword id="KW-0326">Glycosidase</keyword>
<keyword id="KW-0945">Host-virus interaction</keyword>
<keyword id="KW-0378">Hydrolase</keyword>
<keyword id="KW-1185">Reference proteome</keyword>
<keyword id="KW-1233">Viral attachment to host adhesion receptor</keyword>
<keyword id="KW-1161">Viral attachment to host cell</keyword>
<keyword id="KW-0946">Virion</keyword>
<keyword id="KW-1160">Virus entry into host cell</keyword>
<dbReference type="EC" id="3.2.1.28" evidence="1"/>
<dbReference type="EMBL" id="GQ413938">
    <property type="protein sequence ID" value="ACY66718.1"/>
    <property type="molecule type" value="Genomic_DNA"/>
</dbReference>
<dbReference type="RefSeq" id="YP_003347638.1">
    <property type="nucleotide sequence ID" value="NC_013649.2"/>
</dbReference>
<dbReference type="SMR" id="D1L2Y9"/>
<dbReference type="GeneID" id="8683387"/>
<dbReference type="KEGG" id="vg:8683387"/>
<dbReference type="OrthoDB" id="8156at10239"/>
<dbReference type="Proteomes" id="UP000002633">
    <property type="component" value="Genome"/>
</dbReference>
<dbReference type="GO" id="GO:0044423">
    <property type="term" value="C:virion component"/>
    <property type="evidence" value="ECO:0007669"/>
    <property type="project" value="UniProtKB-KW"/>
</dbReference>
<dbReference type="GO" id="GO:0016798">
    <property type="term" value="F:hydrolase activity, acting on glycosyl bonds"/>
    <property type="evidence" value="ECO:0007669"/>
    <property type="project" value="UniProtKB-KW"/>
</dbReference>
<dbReference type="GO" id="GO:0098671">
    <property type="term" value="P:adhesion receptor-mediated virion attachment to host cell"/>
    <property type="evidence" value="ECO:0007669"/>
    <property type="project" value="UniProtKB-KW"/>
</dbReference>
<dbReference type="GO" id="GO:0098994">
    <property type="term" value="P:symbiont entry into host cell via disruption of host cell envelope"/>
    <property type="evidence" value="ECO:0007669"/>
    <property type="project" value="UniProtKB-KW"/>
</dbReference>
<dbReference type="GO" id="GO:0098996">
    <property type="term" value="P:symbiont entry into host cell via disruption of host cell glycocalyx"/>
    <property type="evidence" value="ECO:0007669"/>
    <property type="project" value="UniProtKB-KW"/>
</dbReference>
<dbReference type="InterPro" id="IPR033767">
    <property type="entry name" value="Tail_Gp11"/>
</dbReference>
<dbReference type="Pfam" id="PF17212">
    <property type="entry name" value="Tube"/>
    <property type="match status" value="1"/>
</dbReference>
<name>TUBE1_BPK34</name>
<proteinExistence type="evidence at protein level"/>
<accession>D1L2Y9</accession>
<comment type="function">
    <text evidence="1 4">Structural component of the tail, which functions as a receptor binding protein (RBP) and mediates the attachment to the host capsular exopolysaccharides (Probable). Displays a depolymerase activity that specifically degrades the polysaccharides of Klebsiella pneumoniae capsule, which allows the phage to reach the host cell membrane and bind the entry receptor (PubMed:29273737). Hydrolyzes trehalose (PubMed:29273737).</text>
</comment>
<comment type="catalytic activity">
    <reaction evidence="1">
        <text>alpha,alpha-trehalose + H2O = alpha-D-glucose + beta-D-glucose</text>
        <dbReference type="Rhea" id="RHEA:32675"/>
        <dbReference type="ChEBI" id="CHEBI:15377"/>
        <dbReference type="ChEBI" id="CHEBI:15903"/>
        <dbReference type="ChEBI" id="CHEBI:16551"/>
        <dbReference type="ChEBI" id="CHEBI:17925"/>
        <dbReference type="EC" id="3.2.1.28"/>
    </reaction>
</comment>
<comment type="subcellular location">
    <subcellularLocation>
        <location evidence="3">Virion</location>
    </subcellularLocation>
</comment>
<comment type="similarity">
    <text evidence="3">Belongs to the tail tubular protein gp11 family.</text>
</comment>
<gene>
    <name evidence="5" type="primary">44</name>
</gene>